<sequence length="358" mass="39417">MAAVLKPVLLGLRDAPVHGSPTGPGAWTASKLGGIPDALPTVAAPRPVCQRCGQPLALVVQVYCPLEGSPFHRLLHVFACACPGCSTGGARSWKVFRSQCLQVPEREAQDAQKQGNSLAAEDWCEGADDWGSDTEEGPSPQFTLDFGNDASSAKDVDWTARLQDLRLQDAVLGAAHPVPPGLPLFLPYYICVADEDDYRDFVNLDHAHSLLRDYQQREGIAMDQLLSQSLPNDGDEKYEKTIIKSGDQTFYKFMKRIAACQEQILRYSWSGEPLFLTCPTSEVTELPACSQCGGQRIFEFQLMPALVSMLKSANLGLSVEFGTILVYTCEKSCWPPNHQTPMEEFCIIQEDPDELLFK</sequence>
<evidence type="ECO:0000269" key="1">
    <source>
    </source>
</evidence>
<evidence type="ECO:0007744" key="2">
    <source>
    </source>
</evidence>
<evidence type="ECO:0007744" key="3">
    <source>
    </source>
</evidence>
<keyword id="KW-0007">Acetylation</keyword>
<keyword id="KW-0131">Cell cycle</keyword>
<keyword id="KW-0597">Phosphoprotein</keyword>
<keyword id="KW-1267">Proteomics identification</keyword>
<keyword id="KW-1185">Reference proteome</keyword>
<gene>
    <name type="primary">PDCD2L</name>
</gene>
<feature type="initiator methionine" description="Removed" evidence="2">
    <location>
        <position position="1"/>
    </location>
</feature>
<feature type="chain" id="PRO_0000272645" description="Programmed cell death protein 2-like">
    <location>
        <begin position="2"/>
        <end position="358"/>
    </location>
</feature>
<feature type="modified residue" description="N-acetylalanine" evidence="2">
    <location>
        <position position="2"/>
    </location>
</feature>
<feature type="modified residue" description="Phosphoserine" evidence="3">
    <location>
        <position position="20"/>
    </location>
</feature>
<feature type="modified residue" description="Phosphothreonine" evidence="3">
    <location>
        <position position="22"/>
    </location>
</feature>
<name>PDD2L_HUMAN</name>
<reference key="1">
    <citation type="journal article" date="2004" name="Nature">
        <title>The DNA sequence and biology of human chromosome 19.</title>
        <authorList>
            <person name="Grimwood J."/>
            <person name="Gordon L.A."/>
            <person name="Olsen A.S."/>
            <person name="Terry A."/>
            <person name="Schmutz J."/>
            <person name="Lamerdin J.E."/>
            <person name="Hellsten U."/>
            <person name="Goodstein D."/>
            <person name="Couronne O."/>
            <person name="Tran-Gyamfi M."/>
            <person name="Aerts A."/>
            <person name="Altherr M."/>
            <person name="Ashworth L."/>
            <person name="Bajorek E."/>
            <person name="Black S."/>
            <person name="Branscomb E."/>
            <person name="Caenepeel S."/>
            <person name="Carrano A.V."/>
            <person name="Caoile C."/>
            <person name="Chan Y.M."/>
            <person name="Christensen M."/>
            <person name="Cleland C.A."/>
            <person name="Copeland A."/>
            <person name="Dalin E."/>
            <person name="Dehal P."/>
            <person name="Denys M."/>
            <person name="Detter J.C."/>
            <person name="Escobar J."/>
            <person name="Flowers D."/>
            <person name="Fotopulos D."/>
            <person name="Garcia C."/>
            <person name="Georgescu A.M."/>
            <person name="Glavina T."/>
            <person name="Gomez M."/>
            <person name="Gonzales E."/>
            <person name="Groza M."/>
            <person name="Hammon N."/>
            <person name="Hawkins T."/>
            <person name="Haydu L."/>
            <person name="Ho I."/>
            <person name="Huang W."/>
            <person name="Israni S."/>
            <person name="Jett J."/>
            <person name="Kadner K."/>
            <person name="Kimball H."/>
            <person name="Kobayashi A."/>
            <person name="Larionov V."/>
            <person name="Leem S.-H."/>
            <person name="Lopez F."/>
            <person name="Lou Y."/>
            <person name="Lowry S."/>
            <person name="Malfatti S."/>
            <person name="Martinez D."/>
            <person name="McCready P.M."/>
            <person name="Medina C."/>
            <person name="Morgan J."/>
            <person name="Nelson K."/>
            <person name="Nolan M."/>
            <person name="Ovcharenko I."/>
            <person name="Pitluck S."/>
            <person name="Pollard M."/>
            <person name="Popkie A.P."/>
            <person name="Predki P."/>
            <person name="Quan G."/>
            <person name="Ramirez L."/>
            <person name="Rash S."/>
            <person name="Retterer J."/>
            <person name="Rodriguez A."/>
            <person name="Rogers S."/>
            <person name="Salamov A."/>
            <person name="Salazar A."/>
            <person name="She X."/>
            <person name="Smith D."/>
            <person name="Slezak T."/>
            <person name="Solovyev V."/>
            <person name="Thayer N."/>
            <person name="Tice H."/>
            <person name="Tsai M."/>
            <person name="Ustaszewska A."/>
            <person name="Vo N."/>
            <person name="Wagner M."/>
            <person name="Wheeler J."/>
            <person name="Wu K."/>
            <person name="Xie G."/>
            <person name="Yang J."/>
            <person name="Dubchak I."/>
            <person name="Furey T.S."/>
            <person name="DeJong P."/>
            <person name="Dickson M."/>
            <person name="Gordon D."/>
            <person name="Eichler E.E."/>
            <person name="Pennacchio L.A."/>
            <person name="Richardson P."/>
            <person name="Stubbs L."/>
            <person name="Rokhsar D.S."/>
            <person name="Myers R.M."/>
            <person name="Rubin E.M."/>
            <person name="Lucas S.M."/>
        </authorList>
    </citation>
    <scope>NUCLEOTIDE SEQUENCE [LARGE SCALE GENOMIC DNA]</scope>
</reference>
<reference key="2">
    <citation type="journal article" date="2004" name="Genome Res.">
        <title>The status, quality, and expansion of the NIH full-length cDNA project: the Mammalian Gene Collection (MGC).</title>
        <authorList>
            <consortium name="The MGC Project Team"/>
        </authorList>
    </citation>
    <scope>NUCLEOTIDE SEQUENCE [LARGE SCALE MRNA]</scope>
    <source>
        <tissue>Lung</tissue>
    </source>
</reference>
<reference key="3">
    <citation type="journal article" date="2008" name="Cell Biochem. Funct.">
        <title>The novel MGC13096 protein is correlated with proliferation.</title>
        <authorList>
            <person name="Chen Q."/>
            <person name="Yan C."/>
            <person name="Yan Q."/>
            <person name="Feng L."/>
            <person name="Chen J."/>
            <person name="Qian K."/>
        </authorList>
    </citation>
    <scope>FUNCTION</scope>
    <scope>TISSUE SPECIFICITY</scope>
</reference>
<reference key="4">
    <citation type="journal article" date="2011" name="BMC Syst. Biol.">
        <title>Initial characterization of the human central proteome.</title>
        <authorList>
            <person name="Burkard T.R."/>
            <person name="Planyavsky M."/>
            <person name="Kaupe I."/>
            <person name="Breitwieser F.P."/>
            <person name="Buerckstuemmer T."/>
            <person name="Bennett K.L."/>
            <person name="Superti-Furga G."/>
            <person name="Colinge J."/>
        </authorList>
    </citation>
    <scope>IDENTIFICATION BY MASS SPECTROMETRY [LARGE SCALE ANALYSIS]</scope>
</reference>
<reference key="5">
    <citation type="journal article" date="2012" name="Proc. Natl. Acad. Sci. U.S.A.">
        <title>N-terminal acetylome analyses and functional insights of the N-terminal acetyltransferase NatB.</title>
        <authorList>
            <person name="Van Damme P."/>
            <person name="Lasa M."/>
            <person name="Polevoda B."/>
            <person name="Gazquez C."/>
            <person name="Elosegui-Artola A."/>
            <person name="Kim D.S."/>
            <person name="De Juan-Pardo E."/>
            <person name="Demeyer K."/>
            <person name="Hole K."/>
            <person name="Larrea E."/>
            <person name="Timmerman E."/>
            <person name="Prieto J."/>
            <person name="Arnesen T."/>
            <person name="Sherman F."/>
            <person name="Gevaert K."/>
            <person name="Aldabe R."/>
        </authorList>
    </citation>
    <scope>ACETYLATION [LARGE SCALE ANALYSIS] AT ALA-2</scope>
    <scope>CLEAVAGE OF INITIATOR METHIONINE [LARGE SCALE ANALYSIS]</scope>
    <scope>IDENTIFICATION BY MASS SPECTROMETRY [LARGE SCALE ANALYSIS]</scope>
</reference>
<reference key="6">
    <citation type="journal article" date="2013" name="J. Proteome Res.">
        <title>Toward a comprehensive characterization of a human cancer cell phosphoproteome.</title>
        <authorList>
            <person name="Zhou H."/>
            <person name="Di Palma S."/>
            <person name="Preisinger C."/>
            <person name="Peng M."/>
            <person name="Polat A.N."/>
            <person name="Heck A.J."/>
            <person name="Mohammed S."/>
        </authorList>
    </citation>
    <scope>PHOSPHORYLATION [LARGE SCALE ANALYSIS] AT SER-20 AND THR-22</scope>
    <scope>IDENTIFICATION BY MASS SPECTROMETRY [LARGE SCALE ANALYSIS]</scope>
    <source>
        <tissue>Erythroleukemia</tissue>
    </source>
</reference>
<organism>
    <name type="scientific">Homo sapiens</name>
    <name type="common">Human</name>
    <dbReference type="NCBI Taxonomy" id="9606"/>
    <lineage>
        <taxon>Eukaryota</taxon>
        <taxon>Metazoa</taxon>
        <taxon>Chordata</taxon>
        <taxon>Craniata</taxon>
        <taxon>Vertebrata</taxon>
        <taxon>Euteleostomi</taxon>
        <taxon>Mammalia</taxon>
        <taxon>Eutheria</taxon>
        <taxon>Euarchontoglires</taxon>
        <taxon>Primates</taxon>
        <taxon>Haplorrhini</taxon>
        <taxon>Catarrhini</taxon>
        <taxon>Hominidae</taxon>
        <taxon>Homo</taxon>
    </lineage>
</organism>
<dbReference type="EMBL" id="AC008747">
    <property type="status" value="NOT_ANNOTATED_CDS"/>
    <property type="molecule type" value="Genomic_DNA"/>
</dbReference>
<dbReference type="EMBL" id="AC092073">
    <property type="status" value="NOT_ANNOTATED_CDS"/>
    <property type="molecule type" value="Genomic_DNA"/>
</dbReference>
<dbReference type="EMBL" id="BC006146">
    <property type="protein sequence ID" value="AAH06146.1"/>
    <property type="molecule type" value="mRNA"/>
</dbReference>
<dbReference type="CCDS" id="CCDS12438.1"/>
<dbReference type="RefSeq" id="NP_115722.1">
    <property type="nucleotide sequence ID" value="NM_032346.2"/>
</dbReference>
<dbReference type="BioGRID" id="124032">
    <property type="interactions" value="69"/>
</dbReference>
<dbReference type="FunCoup" id="Q9BRP1">
    <property type="interactions" value="745"/>
</dbReference>
<dbReference type="IntAct" id="Q9BRP1">
    <property type="interactions" value="44"/>
</dbReference>
<dbReference type="STRING" id="9606.ENSP00000246535"/>
<dbReference type="GlyGen" id="Q9BRP1">
    <property type="glycosylation" value="1 site, 1 O-linked glycan (1 site)"/>
</dbReference>
<dbReference type="iPTMnet" id="Q9BRP1"/>
<dbReference type="PhosphoSitePlus" id="Q9BRP1"/>
<dbReference type="BioMuta" id="PDCD2L"/>
<dbReference type="DMDM" id="74732907"/>
<dbReference type="jPOST" id="Q9BRP1"/>
<dbReference type="MassIVE" id="Q9BRP1"/>
<dbReference type="PaxDb" id="9606-ENSP00000246535"/>
<dbReference type="PeptideAtlas" id="Q9BRP1"/>
<dbReference type="ProteomicsDB" id="78794"/>
<dbReference type="Pumba" id="Q9BRP1"/>
<dbReference type="Antibodypedia" id="15737">
    <property type="antibodies" value="234 antibodies from 29 providers"/>
</dbReference>
<dbReference type="DNASU" id="84306"/>
<dbReference type="Ensembl" id="ENST00000246535.4">
    <property type="protein sequence ID" value="ENSP00000246535.1"/>
    <property type="gene ID" value="ENSG00000126249.8"/>
</dbReference>
<dbReference type="GeneID" id="84306"/>
<dbReference type="KEGG" id="hsa:84306"/>
<dbReference type="MANE-Select" id="ENST00000246535.4">
    <property type="protein sequence ID" value="ENSP00000246535.1"/>
    <property type="RefSeq nucleotide sequence ID" value="NM_032346.2"/>
    <property type="RefSeq protein sequence ID" value="NP_115722.1"/>
</dbReference>
<dbReference type="UCSC" id="uc002nvj.4">
    <property type="organism name" value="human"/>
</dbReference>
<dbReference type="AGR" id="HGNC:28194"/>
<dbReference type="CTD" id="84306"/>
<dbReference type="DisGeNET" id="84306"/>
<dbReference type="GeneCards" id="PDCD2L"/>
<dbReference type="HGNC" id="HGNC:28194">
    <property type="gene designation" value="PDCD2L"/>
</dbReference>
<dbReference type="HPA" id="ENSG00000126249">
    <property type="expression patterns" value="Tissue enhanced (skeletal)"/>
</dbReference>
<dbReference type="MIM" id="615661">
    <property type="type" value="gene"/>
</dbReference>
<dbReference type="neXtProt" id="NX_Q9BRP1"/>
<dbReference type="OpenTargets" id="ENSG00000126249"/>
<dbReference type="PharmGKB" id="PA144596395"/>
<dbReference type="VEuPathDB" id="HostDB:ENSG00000126249"/>
<dbReference type="eggNOG" id="KOG2061">
    <property type="taxonomic scope" value="Eukaryota"/>
</dbReference>
<dbReference type="GeneTree" id="ENSGT00940000158339"/>
<dbReference type="HOGENOM" id="CLU_034893_1_0_1"/>
<dbReference type="InParanoid" id="Q9BRP1"/>
<dbReference type="OMA" id="MPGPWAD"/>
<dbReference type="OrthoDB" id="366284at2759"/>
<dbReference type="PAN-GO" id="Q9BRP1">
    <property type="GO annotations" value="1 GO annotation based on evolutionary models"/>
</dbReference>
<dbReference type="PhylomeDB" id="Q9BRP1"/>
<dbReference type="TreeFam" id="TF354282"/>
<dbReference type="PathwayCommons" id="Q9BRP1"/>
<dbReference type="SignaLink" id="Q9BRP1"/>
<dbReference type="BioGRID-ORCS" id="84306">
    <property type="hits" value="56 hits in 1160 CRISPR screens"/>
</dbReference>
<dbReference type="ChiTaRS" id="PDCD2L">
    <property type="organism name" value="human"/>
</dbReference>
<dbReference type="GenomeRNAi" id="84306"/>
<dbReference type="Pharos" id="Q9BRP1">
    <property type="development level" value="Tbio"/>
</dbReference>
<dbReference type="PRO" id="PR:Q9BRP1"/>
<dbReference type="Proteomes" id="UP000005640">
    <property type="component" value="Chromosome 19"/>
</dbReference>
<dbReference type="RNAct" id="Q9BRP1">
    <property type="molecule type" value="protein"/>
</dbReference>
<dbReference type="Bgee" id="ENSG00000126249">
    <property type="expression patterns" value="Expressed in primordial germ cell in gonad and 174 other cell types or tissues"/>
</dbReference>
<dbReference type="ExpressionAtlas" id="Q9BRP1">
    <property type="expression patterns" value="baseline and differential"/>
</dbReference>
<dbReference type="GO" id="GO:0005737">
    <property type="term" value="C:cytoplasm"/>
    <property type="evidence" value="ECO:0007669"/>
    <property type="project" value="InterPro"/>
</dbReference>
<dbReference type="GO" id="GO:0016020">
    <property type="term" value="C:membrane"/>
    <property type="evidence" value="ECO:0007005"/>
    <property type="project" value="UniProtKB"/>
</dbReference>
<dbReference type="GO" id="GO:0006915">
    <property type="term" value="P:apoptotic process"/>
    <property type="evidence" value="ECO:0000318"/>
    <property type="project" value="GO_Central"/>
</dbReference>
<dbReference type="Gene3D" id="2.30.320.10">
    <property type="entry name" value="YwqG-like"/>
    <property type="match status" value="1"/>
</dbReference>
<dbReference type="InterPro" id="IPR052815">
    <property type="entry name" value="PDCD2-like_regulator"/>
</dbReference>
<dbReference type="InterPro" id="IPR007320">
    <property type="entry name" value="PDCD2_C"/>
</dbReference>
<dbReference type="PANTHER" id="PTHR46421">
    <property type="entry name" value="PROGRAMMED CELL DEATH PROTEIN 2-LIKE"/>
    <property type="match status" value="1"/>
</dbReference>
<dbReference type="PANTHER" id="PTHR46421:SF1">
    <property type="entry name" value="PROGRAMMED CELL DEATH PROTEIN 2-LIKE"/>
    <property type="match status" value="1"/>
</dbReference>
<dbReference type="Pfam" id="PF04194">
    <property type="entry name" value="PDCD2_C"/>
    <property type="match status" value="1"/>
</dbReference>
<proteinExistence type="evidence at protein level"/>
<protein>
    <recommendedName>
        <fullName>Programmed cell death protein 2-like</fullName>
    </recommendedName>
</protein>
<comment type="function">
    <text evidence="1">Over-expression suppresses AP1, CREB, NFAT, and NF-kB transcriptional activation, and delays cell cycle progression at S phase.</text>
</comment>
<comment type="interaction">
    <interactant intactId="EBI-2372173">
        <id>Q9BRP1</id>
    </interactant>
    <interactant intactId="EBI-5659717">
        <id>Q9UKP3</id>
        <label>ITGB1BP2</label>
    </interactant>
    <organismsDiffer>false</organismsDiffer>
    <experiments>3</experiments>
</comment>
<comment type="tissue specificity">
    <text evidence="1">Higher expression in lung, colon, mammary gland, cervix, stomach and small intestine.</text>
</comment>
<accession>Q9BRP1</accession>